<evidence type="ECO:0000255" key="1"/>
<evidence type="ECO:0000255" key="2">
    <source>
        <dbReference type="PROSITE-ProRule" id="PRU00159"/>
    </source>
</evidence>
<evidence type="ECO:0000255" key="3">
    <source>
        <dbReference type="PROSITE-ProRule" id="PRU00498"/>
    </source>
</evidence>
<evidence type="ECO:0000256" key="4">
    <source>
        <dbReference type="SAM" id="MobiDB-lite"/>
    </source>
</evidence>
<evidence type="ECO:0000269" key="5">
    <source>
    </source>
</evidence>
<evidence type="ECO:0000269" key="6">
    <source>
    </source>
</evidence>
<evidence type="ECO:0000269" key="7">
    <source>
    </source>
</evidence>
<evidence type="ECO:0000269" key="8">
    <source>
    </source>
</evidence>
<evidence type="ECO:0000269" key="9">
    <source>
    </source>
</evidence>
<evidence type="ECO:0000269" key="10">
    <source>
    </source>
</evidence>
<evidence type="ECO:0000303" key="11">
    <source>
    </source>
</evidence>
<evidence type="ECO:0000303" key="12">
    <source>
    </source>
</evidence>
<evidence type="ECO:0000303" key="13">
    <source>
    </source>
</evidence>
<evidence type="ECO:0000305" key="14"/>
<evidence type="ECO:0000312" key="15">
    <source>
        <dbReference type="EMBL" id="BAD05545.1"/>
    </source>
</evidence>
<evidence type="ECO:0000312" key="16">
    <source>
        <dbReference type="EMBL" id="BAF23022.1"/>
    </source>
</evidence>
<evidence type="ECO:0000312" key="17">
    <source>
        <dbReference type="EMBL" id="EEE68130.1"/>
    </source>
</evidence>
<comment type="function">
    <text evidence="7 8 9 10">LRR receptor kinase involved in defense response (PubMed:22058019). Does not seem to be required specifically for XA21-mediated immunity or basal resistance to Xanthomonas oryzae pv. oryzae (Xoo), or immunity to Magnaporthe oryzae (PubMed:25266270). Involved in brassinosteroid (BR) signaling pathway. Acts as a coreceptor of BRI1. Forms at the plasma membrane a receptor complex with BRI1 which is activated in response to brassinolide. Phosphorylates BRI1 (PubMed:27424498). Required for normal plant growth and leaf development (PubMed:22058019, PubMed:25266270). Possesses kinase activity in vitro (PubMed:25266270).</text>
</comment>
<comment type="catalytic activity">
    <reaction evidence="14">
        <text>L-seryl-[protein] + ATP = O-phospho-L-seryl-[protein] + ADP + H(+)</text>
        <dbReference type="Rhea" id="RHEA:17989"/>
        <dbReference type="Rhea" id="RHEA-COMP:9863"/>
        <dbReference type="Rhea" id="RHEA-COMP:11604"/>
        <dbReference type="ChEBI" id="CHEBI:15378"/>
        <dbReference type="ChEBI" id="CHEBI:29999"/>
        <dbReference type="ChEBI" id="CHEBI:30616"/>
        <dbReference type="ChEBI" id="CHEBI:83421"/>
        <dbReference type="ChEBI" id="CHEBI:456216"/>
        <dbReference type="EC" id="2.7.11.1"/>
    </reaction>
</comment>
<comment type="catalytic activity">
    <reaction evidence="14">
        <text>L-threonyl-[protein] + ATP = O-phospho-L-threonyl-[protein] + ADP + H(+)</text>
        <dbReference type="Rhea" id="RHEA:46608"/>
        <dbReference type="Rhea" id="RHEA-COMP:11060"/>
        <dbReference type="Rhea" id="RHEA-COMP:11605"/>
        <dbReference type="ChEBI" id="CHEBI:15378"/>
        <dbReference type="ChEBI" id="CHEBI:30013"/>
        <dbReference type="ChEBI" id="CHEBI:30616"/>
        <dbReference type="ChEBI" id="CHEBI:61977"/>
        <dbReference type="ChEBI" id="CHEBI:456216"/>
        <dbReference type="EC" id="2.7.11.1"/>
    </reaction>
</comment>
<comment type="subunit">
    <text evidence="7 9 10">Forms homodimers (PubMed:25266270). Interacts with BRI1 (PubMed:19754838, PubMed:25266270, PubMed:27424498). Interacts with REM4.1 (PubMed:27424498).</text>
</comment>
<comment type="subcellular location">
    <subcellularLocation>
        <location evidence="7">Cell membrane</location>
        <topology evidence="1">Single-pass membrane protein</topology>
    </subcellularLocation>
</comment>
<comment type="tissue specificity">
    <text evidence="5">Expressed in developing lateral roots, shoot apex, leaf blades, lamina joints and flowers. Expressed at low levels in leaf sheaths and panicles.</text>
</comment>
<comment type="induction">
    <text evidence="6">Induced by benzothiadiazole (BTH) and infection with an incompatible strain of the blast fungus Magnaporthe oryzae.</text>
</comment>
<comment type="biotechnology">
    <text evidence="7">Over-expression of a truncated intracellular domain of BAK1 induces partial suppression of endogenous BAK1 expression, leading to an erect leaf phenotype. This could be a potential tool to improve rice grain yield at high density planting.</text>
</comment>
<comment type="miscellaneous">
    <text evidence="7 8">Plants over-expressing BAK1 have brassinosteroid gain-of-function phenotypes, including enlarged lamina joint angle, stunted stature and hypersensitivity to 24-epibrassinolide (BL) (PubMed:19754838). Plants silencing BAK1 show decreased sensitivity to BL, are semi-dwarf, have abnormal growth patterns in leaf development, increased expression level of pathogenesis-related genes and enhanced susceptibility to the rice blast fungal pathogen Magnaporthe oryzae (PubMed:22058019).</text>
</comment>
<comment type="similarity">
    <text evidence="2">Belongs to the protein kinase superfamily. Ser/Thr protein kinase family.</text>
</comment>
<accession>Q6Z4U4</accession>
<protein>
    <recommendedName>
        <fullName evidence="14">LRR receptor kinase BAK1</fullName>
        <ecNumber evidence="14">2.7.11.1</ecNumber>
    </recommendedName>
    <alternativeName>
        <fullName evidence="14">BRI1-associated receptor kinase 1 homolog</fullName>
        <shortName evidence="13">OsBAK1</shortName>
    </alternativeName>
    <alternativeName>
        <fullName evidence="12">Benzothiadiazole-induced SERK1</fullName>
        <shortName evidence="14">BTH-induced SERK1</shortName>
        <shortName evidence="12">OsBISERK1</shortName>
    </alternativeName>
    <alternativeName>
        <fullName evidence="14">Somatic embryogenesis receptor kinase 1</fullName>
        <shortName evidence="11">OsSERK1</shortName>
    </alternativeName>
</protein>
<keyword id="KW-0067">ATP-binding</keyword>
<keyword id="KW-1070">Brassinosteroid signaling pathway</keyword>
<keyword id="KW-1003">Cell membrane</keyword>
<keyword id="KW-0325">Glycoprotein</keyword>
<keyword id="KW-0418">Kinase</keyword>
<keyword id="KW-0433">Leucine-rich repeat</keyword>
<keyword id="KW-0472">Membrane</keyword>
<keyword id="KW-0547">Nucleotide-binding</keyword>
<keyword id="KW-0675">Receptor</keyword>
<keyword id="KW-1185">Reference proteome</keyword>
<keyword id="KW-0677">Repeat</keyword>
<keyword id="KW-0723">Serine/threonine-protein kinase</keyword>
<keyword id="KW-0732">Signal</keyword>
<keyword id="KW-0808">Transferase</keyword>
<keyword id="KW-0812">Transmembrane</keyword>
<keyword id="KW-1133">Transmembrane helix</keyword>
<organism>
    <name type="scientific">Oryza sativa subsp. japonica</name>
    <name type="common">Rice</name>
    <dbReference type="NCBI Taxonomy" id="39947"/>
    <lineage>
        <taxon>Eukaryota</taxon>
        <taxon>Viridiplantae</taxon>
        <taxon>Streptophyta</taxon>
        <taxon>Embryophyta</taxon>
        <taxon>Tracheophyta</taxon>
        <taxon>Spermatophyta</taxon>
        <taxon>Magnoliopsida</taxon>
        <taxon>Liliopsida</taxon>
        <taxon>Poales</taxon>
        <taxon>Poaceae</taxon>
        <taxon>BOP clade</taxon>
        <taxon>Oryzoideae</taxon>
        <taxon>Oryzeae</taxon>
        <taxon>Oryzinae</taxon>
        <taxon>Oryza</taxon>
        <taxon>Oryza sativa</taxon>
    </lineage>
</organism>
<sequence length="624" mass="68702">MAAHRWAVWAVLLLRLLVPAARVLANMEGDALHSLRTNLVDPNNVLQSWDPTLVNPCTWFHVTCNNDNSVIRVDLGNAALSGTLVPQLGQLKNLQYLELYSNNISGTIPSELGNLTNLVSLDLYLNNFTGPIPDSLGNLLKLRFLRLNNNSLSGSIPKSLTAITALQVLDLSNNNLSGEVPSTGSFSLFTPISFANNPSLCGPGTTKPCPGAPPFSPPPPYNPPTPVQSPGSSSSTGAIAGGVAAGAALLFAIPAIGFAWYRRRKPQEHFFDVPAEEDPEVHLGQLKRFSLRELQVATDTFSNKNILGRGGFGKVYKGRLADGSLVAVKRLKEERTPGGELQFQTEVEMISMAVHRNLLRLRGFCMTPTERLLVYPYMANGSVASRLRERPPSEPPLDWRTRRRIALGSARGLSYLHDHCDPKIIHRDVKAANILLDEDFEAVVGDFGLAKLMDYKDTHVTTAVRGTIGHIAPEYLSTGKSSEKTDVFGYGIMLLELITGQRAFDLARLANDDDVMLLDWVKGLLKEKRLEMLVDPDLQSNYIDVEVESLIQVALLCTQGSPTERPKMAEVVRMLEGDGLAERWEEWQKIEVVRQEVELGPHRNSEWIVDSTDNLHAVELSGPR</sequence>
<feature type="signal peptide" evidence="1">
    <location>
        <begin position="1"/>
        <end position="25"/>
    </location>
</feature>
<feature type="chain" id="PRO_5008971835" description="LRR receptor kinase BAK1" evidence="1">
    <location>
        <begin position="26"/>
        <end position="624"/>
    </location>
</feature>
<feature type="topological domain" description="Extracellular" evidence="14">
    <location>
        <begin position="26"/>
        <end position="237"/>
    </location>
</feature>
<feature type="transmembrane region" description="Helical" evidence="1">
    <location>
        <begin position="238"/>
        <end position="258"/>
    </location>
</feature>
<feature type="topological domain" description="Cytoplasmic" evidence="14">
    <location>
        <begin position="259"/>
        <end position="624"/>
    </location>
</feature>
<feature type="repeat" description="LRR 1" evidence="1">
    <location>
        <begin position="91"/>
        <end position="115"/>
    </location>
</feature>
<feature type="repeat" description="LRR 2" evidence="1">
    <location>
        <begin position="117"/>
        <end position="139"/>
    </location>
</feature>
<feature type="repeat" description="LRR 3" evidence="1">
    <location>
        <begin position="140"/>
        <end position="163"/>
    </location>
</feature>
<feature type="repeat" description="LRR 4" evidence="1">
    <location>
        <begin position="164"/>
        <end position="188"/>
    </location>
</feature>
<feature type="domain" description="Protein kinase" evidence="2">
    <location>
        <begin position="301"/>
        <end position="588"/>
    </location>
</feature>
<feature type="region of interest" description="Disordered" evidence="4">
    <location>
        <begin position="205"/>
        <end position="236"/>
    </location>
</feature>
<feature type="compositionally biased region" description="Pro residues" evidence="4">
    <location>
        <begin position="210"/>
        <end position="227"/>
    </location>
</feature>
<feature type="active site" description="Proton acceptor" evidence="2">
    <location>
        <position position="428"/>
    </location>
</feature>
<feature type="binding site" evidence="2">
    <location>
        <begin position="307"/>
        <end position="315"/>
    </location>
    <ligand>
        <name>ATP</name>
        <dbReference type="ChEBI" id="CHEBI:30616"/>
    </ligand>
</feature>
<feature type="binding site" evidence="2">
    <location>
        <position position="329"/>
    </location>
    <ligand>
        <name>ATP</name>
        <dbReference type="ChEBI" id="CHEBI:30616"/>
    </ligand>
</feature>
<feature type="glycosylation site" description="N-linked (GlcNAc...) asparagine" evidence="3">
    <location>
        <position position="103"/>
    </location>
</feature>
<feature type="glycosylation site" description="N-linked (GlcNAc...) asparagine" evidence="3">
    <location>
        <position position="114"/>
    </location>
</feature>
<feature type="glycosylation site" description="N-linked (GlcNAc...) asparagine" evidence="3">
    <location>
        <position position="127"/>
    </location>
</feature>
<feature type="glycosylation site" description="N-linked (GlcNAc...) asparagine" evidence="3">
    <location>
        <position position="149"/>
    </location>
</feature>
<feature type="glycosylation site" description="N-linked (GlcNAc...) asparagine" evidence="3">
    <location>
        <position position="175"/>
    </location>
</feature>
<gene>
    <name evidence="13" type="primary">BAK1</name>
    <name evidence="12" type="synonym">BISERK1</name>
    <name evidence="16" type="ordered locus">Os08g0174700</name>
    <name evidence="14" type="ordered locus">LOC_Os08g07760</name>
    <name evidence="17" type="ORF">OsJ_26221</name>
    <name evidence="15" type="ORF">OSJNBa0054L03.30</name>
</gene>
<reference key="1">
    <citation type="journal article" date="2005" name="Biochim. Biophys. Acta">
        <title>Expression of SERK family receptor-like protein kinase genes in rice.</title>
        <authorList>
            <person name="Ito Y."/>
            <person name="Takaya K."/>
            <person name="Kurata N."/>
        </authorList>
    </citation>
    <scope>NUCLEOTIDE SEQUENCE [MRNA]</scope>
    <scope>TISSUE SPECIFICITY</scope>
    <source>
        <strain>cv. Nipponbare</strain>
    </source>
</reference>
<reference key="2">
    <citation type="journal article" date="2005" name="Nature">
        <title>The map-based sequence of the rice genome.</title>
        <authorList>
            <consortium name="International rice genome sequencing project (IRGSP)"/>
        </authorList>
    </citation>
    <scope>NUCLEOTIDE SEQUENCE [LARGE SCALE GENOMIC DNA]</scope>
    <source>
        <strain>cv. Nipponbare</strain>
    </source>
</reference>
<reference key="3">
    <citation type="journal article" date="2008" name="Nucleic Acids Res.">
        <title>The rice annotation project database (RAP-DB): 2008 update.</title>
        <authorList>
            <consortium name="The rice annotation project (RAP)"/>
        </authorList>
    </citation>
    <scope>GENOME REANNOTATION</scope>
    <source>
        <strain>cv. Nipponbare</strain>
    </source>
</reference>
<reference key="4">
    <citation type="journal article" date="2013" name="Rice">
        <title>Improvement of the Oryza sativa Nipponbare reference genome using next generation sequence and optical map data.</title>
        <authorList>
            <person name="Kawahara Y."/>
            <person name="de la Bastide M."/>
            <person name="Hamilton J.P."/>
            <person name="Kanamori H."/>
            <person name="McCombie W.R."/>
            <person name="Ouyang S."/>
            <person name="Schwartz D.C."/>
            <person name="Tanaka T."/>
            <person name="Wu J."/>
            <person name="Zhou S."/>
            <person name="Childs K.L."/>
            <person name="Davidson R.M."/>
            <person name="Lin H."/>
            <person name="Quesada-Ocampo L."/>
            <person name="Vaillancourt B."/>
            <person name="Sakai H."/>
            <person name="Lee S.S."/>
            <person name="Kim J."/>
            <person name="Numa H."/>
            <person name="Itoh T."/>
            <person name="Buell C.R."/>
            <person name="Matsumoto T."/>
        </authorList>
    </citation>
    <scope>GENOME REANNOTATION</scope>
    <source>
        <strain>cv. Nipponbare</strain>
    </source>
</reference>
<reference key="5">
    <citation type="journal article" date="2005" name="PLoS Biol.">
        <title>The genomes of Oryza sativa: a history of duplications.</title>
        <authorList>
            <person name="Yu J."/>
            <person name="Wang J."/>
            <person name="Lin W."/>
            <person name="Li S."/>
            <person name="Li H."/>
            <person name="Zhou J."/>
            <person name="Ni P."/>
            <person name="Dong W."/>
            <person name="Hu S."/>
            <person name="Zeng C."/>
            <person name="Zhang J."/>
            <person name="Zhang Y."/>
            <person name="Li R."/>
            <person name="Xu Z."/>
            <person name="Li S."/>
            <person name="Li X."/>
            <person name="Zheng H."/>
            <person name="Cong L."/>
            <person name="Lin L."/>
            <person name="Yin J."/>
            <person name="Geng J."/>
            <person name="Li G."/>
            <person name="Shi J."/>
            <person name="Liu J."/>
            <person name="Lv H."/>
            <person name="Li J."/>
            <person name="Wang J."/>
            <person name="Deng Y."/>
            <person name="Ran L."/>
            <person name="Shi X."/>
            <person name="Wang X."/>
            <person name="Wu Q."/>
            <person name="Li C."/>
            <person name="Ren X."/>
            <person name="Wang J."/>
            <person name="Wang X."/>
            <person name="Li D."/>
            <person name="Liu D."/>
            <person name="Zhang X."/>
            <person name="Ji Z."/>
            <person name="Zhao W."/>
            <person name="Sun Y."/>
            <person name="Zhang Z."/>
            <person name="Bao J."/>
            <person name="Han Y."/>
            <person name="Dong L."/>
            <person name="Ji J."/>
            <person name="Chen P."/>
            <person name="Wu S."/>
            <person name="Liu J."/>
            <person name="Xiao Y."/>
            <person name="Bu D."/>
            <person name="Tan J."/>
            <person name="Yang L."/>
            <person name="Ye C."/>
            <person name="Zhang J."/>
            <person name="Xu J."/>
            <person name="Zhou Y."/>
            <person name="Yu Y."/>
            <person name="Zhang B."/>
            <person name="Zhuang S."/>
            <person name="Wei H."/>
            <person name="Liu B."/>
            <person name="Lei M."/>
            <person name="Yu H."/>
            <person name="Li Y."/>
            <person name="Xu H."/>
            <person name="Wei S."/>
            <person name="He X."/>
            <person name="Fang L."/>
            <person name="Zhang Z."/>
            <person name="Zhang Y."/>
            <person name="Huang X."/>
            <person name="Su Z."/>
            <person name="Tong W."/>
            <person name="Li J."/>
            <person name="Tong Z."/>
            <person name="Li S."/>
            <person name="Ye J."/>
            <person name="Wang L."/>
            <person name="Fang L."/>
            <person name="Lei T."/>
            <person name="Chen C.-S."/>
            <person name="Chen H.-C."/>
            <person name="Xu Z."/>
            <person name="Li H."/>
            <person name="Huang H."/>
            <person name="Zhang F."/>
            <person name="Xu H."/>
            <person name="Li N."/>
            <person name="Zhao C."/>
            <person name="Li S."/>
            <person name="Dong L."/>
            <person name="Huang Y."/>
            <person name="Li L."/>
            <person name="Xi Y."/>
            <person name="Qi Q."/>
            <person name="Li W."/>
            <person name="Zhang B."/>
            <person name="Hu W."/>
            <person name="Zhang Y."/>
            <person name="Tian X."/>
            <person name="Jiao Y."/>
            <person name="Liang X."/>
            <person name="Jin J."/>
            <person name="Gao L."/>
            <person name="Zheng W."/>
            <person name="Hao B."/>
            <person name="Liu S.-M."/>
            <person name="Wang W."/>
            <person name="Yuan L."/>
            <person name="Cao M."/>
            <person name="McDermott J."/>
            <person name="Samudrala R."/>
            <person name="Wang J."/>
            <person name="Wong G.K.-S."/>
            <person name="Yang H."/>
        </authorList>
    </citation>
    <scope>NUCLEOTIDE SEQUENCE [LARGE SCALE GENOMIC DNA]</scope>
    <source>
        <strain>cv. Nipponbare</strain>
    </source>
</reference>
<reference key="6">
    <citation type="journal article" date="2003" name="Science">
        <title>Collection, mapping, and annotation of over 28,000 cDNA clones from japonica rice.</title>
        <authorList>
            <consortium name="The rice full-length cDNA consortium"/>
        </authorList>
    </citation>
    <scope>NUCLEOTIDE SEQUENCE [LARGE SCALE MRNA]</scope>
    <source>
        <strain>cv. Nipponbare</strain>
    </source>
</reference>
<reference key="7">
    <citation type="journal article" date="2008" name="Mol. Biol. Rep.">
        <title>Molecular characterization and expression analysis of OsBISERK1, a gene encoding a leucine-rich repeat receptor-like kinase, during disease resistance responses in rice.</title>
        <authorList>
            <person name="Song D."/>
            <person name="Li G."/>
            <person name="Song F."/>
            <person name="Zheng Z."/>
        </authorList>
    </citation>
    <scope>INDUCTION</scope>
</reference>
<reference key="8">
    <citation type="journal article" date="2009" name="Plant Biotechnol. J.">
        <title>Engineering OsBAK1 gene as a molecular tool to improve rice architecture for high yield.</title>
        <authorList>
            <person name="Li D."/>
            <person name="Wang L."/>
            <person name="Wang M."/>
            <person name="Xu Y.Y."/>
            <person name="Luo W."/>
            <person name="Liu Y.J."/>
            <person name="Xu Z.H."/>
            <person name="Li J."/>
            <person name="Chong K."/>
        </authorList>
    </citation>
    <scope>FUNCTION</scope>
    <scope>INTERACTION WITH BRI1</scope>
    <scope>SUBCELLULAR LOCATION</scope>
    <scope>BIOTECHNOLOGY</scope>
    <source>
        <strain>cv. Zhonghua 11</strain>
    </source>
</reference>
<reference key="9">
    <citation type="journal article" date="2011" name="Mol. Cells">
        <title>A subset of OsSERK genes, including OsBAK1, affects normal growth and leaf development of rice.</title>
        <authorList>
            <person name="Park H.S."/>
            <person name="Ryu H.Y."/>
            <person name="Kim B.H."/>
            <person name="Kim S.Y."/>
            <person name="Yoon I.S."/>
            <person name="Nam K.H."/>
        </authorList>
    </citation>
    <scope>FUNCTION</scope>
</reference>
<reference key="10">
    <citation type="journal article" date="2014" name="J. Integr. Plant Biol.">
        <title>OsSERK1 regulates rice development but not immunity to Xanthomonas oryzae pv. oryzae or Magnaporthe oryzae.</title>
        <authorList>
            <person name="Zuo S."/>
            <person name="Zhou X."/>
            <person name="Chen M."/>
            <person name="Zhang S."/>
            <person name="Schwessinger B."/>
            <person name="Ruan D."/>
            <person name="Yuan C."/>
            <person name="Wang J."/>
            <person name="Chen X."/>
            <person name="Ronald P.C."/>
        </authorList>
    </citation>
    <scope>FUNCTION</scope>
    <scope>SUBUNIT</scope>
    <scope>INTERACTION WITH BRI1</scope>
</reference>
<reference key="11">
    <citation type="journal article" date="2016" name="Dev. Cell">
        <title>OsREM4.1 interacts with OsSERK1 to coordinate the interlinking between abscisic acid and brassinosteroid signaling in rice.</title>
        <authorList>
            <person name="Gui J."/>
            <person name="Zheng S."/>
            <person name="Liu C."/>
            <person name="Shen J."/>
            <person name="Li J."/>
            <person name="Li L."/>
        </authorList>
    </citation>
    <scope>FUNCTION</scope>
    <scope>INTERACTION WITH BRI1 AND REM4.1</scope>
</reference>
<proteinExistence type="evidence at protein level"/>
<name>BAK1_ORYSJ</name>
<dbReference type="EC" id="2.7.11.1" evidence="14"/>
<dbReference type="EMBL" id="AB188247">
    <property type="protein sequence ID" value="BAD86793.1"/>
    <property type="molecule type" value="mRNA"/>
</dbReference>
<dbReference type="EMBL" id="AP005164">
    <property type="protein sequence ID" value="BAD05545.1"/>
    <property type="molecule type" value="Genomic_DNA"/>
</dbReference>
<dbReference type="EMBL" id="AP008214">
    <property type="protein sequence ID" value="BAF23022.1"/>
    <property type="molecule type" value="Genomic_DNA"/>
</dbReference>
<dbReference type="EMBL" id="AP014964">
    <property type="protein sequence ID" value="BAT04050.1"/>
    <property type="molecule type" value="Genomic_DNA"/>
</dbReference>
<dbReference type="EMBL" id="CM000145">
    <property type="protein sequence ID" value="EEE68130.1"/>
    <property type="molecule type" value="Genomic_DNA"/>
</dbReference>
<dbReference type="EMBL" id="AK103038">
    <property type="protein sequence ID" value="BAG95849.1"/>
    <property type="molecule type" value="mRNA"/>
</dbReference>
<dbReference type="RefSeq" id="XP_015649858.1">
    <property type="nucleotide sequence ID" value="XM_015794372.1"/>
</dbReference>
<dbReference type="SMR" id="Q6Z4U4"/>
<dbReference type="FunCoup" id="Q6Z4U4">
    <property type="interactions" value="246"/>
</dbReference>
<dbReference type="STRING" id="39947.Q6Z4U4"/>
<dbReference type="GlyCosmos" id="Q6Z4U4">
    <property type="glycosylation" value="5 sites, No reported glycans"/>
</dbReference>
<dbReference type="iPTMnet" id="Q6Z4U4"/>
<dbReference type="PaxDb" id="39947-Q6Z4U4"/>
<dbReference type="EnsemblPlants" id="Os08t0174700-01">
    <property type="protein sequence ID" value="Os08t0174700-01"/>
    <property type="gene ID" value="Os08g0174700"/>
</dbReference>
<dbReference type="Gramene" id="Os08t0174700-01">
    <property type="protein sequence ID" value="Os08t0174700-01"/>
    <property type="gene ID" value="Os08g0174700"/>
</dbReference>
<dbReference type="KEGG" id="dosa:Os08g0174700"/>
<dbReference type="eggNOG" id="ENOG502QQ7B">
    <property type="taxonomic scope" value="Eukaryota"/>
</dbReference>
<dbReference type="HOGENOM" id="CLU_000288_92_7_1"/>
<dbReference type="InParanoid" id="Q6Z4U4"/>
<dbReference type="OMA" id="WYRKKHG"/>
<dbReference type="OrthoDB" id="4062651at2759"/>
<dbReference type="Proteomes" id="UP000000763">
    <property type="component" value="Chromosome 8"/>
</dbReference>
<dbReference type="Proteomes" id="UP000007752">
    <property type="component" value="Chromosome 8"/>
</dbReference>
<dbReference type="Proteomes" id="UP000059680">
    <property type="component" value="Chromosome 8"/>
</dbReference>
<dbReference type="GO" id="GO:0005886">
    <property type="term" value="C:plasma membrane"/>
    <property type="evidence" value="ECO:0000314"/>
    <property type="project" value="UniProtKB"/>
</dbReference>
<dbReference type="GO" id="GO:0005524">
    <property type="term" value="F:ATP binding"/>
    <property type="evidence" value="ECO:0007669"/>
    <property type="project" value="UniProtKB-KW"/>
</dbReference>
<dbReference type="GO" id="GO:0015026">
    <property type="term" value="F:coreceptor activity"/>
    <property type="evidence" value="ECO:0000304"/>
    <property type="project" value="UniProtKB"/>
</dbReference>
<dbReference type="GO" id="GO:0042803">
    <property type="term" value="F:protein homodimerization activity"/>
    <property type="evidence" value="ECO:0000353"/>
    <property type="project" value="UniProtKB"/>
</dbReference>
<dbReference type="GO" id="GO:0004672">
    <property type="term" value="F:protein kinase activity"/>
    <property type="evidence" value="ECO:0000314"/>
    <property type="project" value="UniProtKB"/>
</dbReference>
<dbReference type="GO" id="GO:0106310">
    <property type="term" value="F:protein serine kinase activity"/>
    <property type="evidence" value="ECO:0007669"/>
    <property type="project" value="RHEA"/>
</dbReference>
<dbReference type="GO" id="GO:0004674">
    <property type="term" value="F:protein serine/threonine kinase activity"/>
    <property type="evidence" value="ECO:0007669"/>
    <property type="project" value="UniProtKB-KW"/>
</dbReference>
<dbReference type="GO" id="GO:0009742">
    <property type="term" value="P:brassinosteroid mediated signaling pathway"/>
    <property type="evidence" value="ECO:0000315"/>
    <property type="project" value="UniProtKB"/>
</dbReference>
<dbReference type="FunFam" id="3.30.200.20:FF:000015">
    <property type="entry name" value="Somatic embryogenesis receptor kinase 1"/>
    <property type="match status" value="1"/>
</dbReference>
<dbReference type="FunFam" id="3.80.10.10:FF:000024">
    <property type="entry name" value="Somatic embryogenesis receptor kinase 1"/>
    <property type="match status" value="1"/>
</dbReference>
<dbReference type="FunFam" id="1.10.510.10:FF:000016">
    <property type="entry name" value="Somatic embryogenesis receptor-like kinase 1"/>
    <property type="match status" value="1"/>
</dbReference>
<dbReference type="Gene3D" id="3.30.200.20">
    <property type="entry name" value="Phosphorylase Kinase, domain 1"/>
    <property type="match status" value="1"/>
</dbReference>
<dbReference type="Gene3D" id="3.80.10.10">
    <property type="entry name" value="Ribonuclease Inhibitor"/>
    <property type="match status" value="1"/>
</dbReference>
<dbReference type="Gene3D" id="1.20.5.510">
    <property type="entry name" value="Single helix bin"/>
    <property type="match status" value="1"/>
</dbReference>
<dbReference type="Gene3D" id="1.10.510.10">
    <property type="entry name" value="Transferase(Phosphotransferase) domain 1"/>
    <property type="match status" value="1"/>
</dbReference>
<dbReference type="InterPro" id="IPR011009">
    <property type="entry name" value="Kinase-like_dom_sf"/>
</dbReference>
<dbReference type="InterPro" id="IPR001611">
    <property type="entry name" value="Leu-rich_rpt"/>
</dbReference>
<dbReference type="InterPro" id="IPR032675">
    <property type="entry name" value="LRR_dom_sf"/>
</dbReference>
<dbReference type="InterPro" id="IPR013210">
    <property type="entry name" value="LRR_N_plant-typ"/>
</dbReference>
<dbReference type="InterPro" id="IPR000719">
    <property type="entry name" value="Prot_kinase_dom"/>
</dbReference>
<dbReference type="InterPro" id="IPR017441">
    <property type="entry name" value="Protein_kinase_ATP_BS"/>
</dbReference>
<dbReference type="InterPro" id="IPR001245">
    <property type="entry name" value="Ser-Thr/Tyr_kinase_cat_dom"/>
</dbReference>
<dbReference type="InterPro" id="IPR008271">
    <property type="entry name" value="Ser/Thr_kinase_AS"/>
</dbReference>
<dbReference type="PANTHER" id="PTHR47988">
    <property type="entry name" value="SOMATIC EMBRYOGENESIS RECEPTOR KINASE 1"/>
    <property type="match status" value="1"/>
</dbReference>
<dbReference type="Pfam" id="PF00560">
    <property type="entry name" value="LRR_1"/>
    <property type="match status" value="4"/>
</dbReference>
<dbReference type="Pfam" id="PF08263">
    <property type="entry name" value="LRRNT_2"/>
    <property type="match status" value="1"/>
</dbReference>
<dbReference type="Pfam" id="PF07714">
    <property type="entry name" value="PK_Tyr_Ser-Thr"/>
    <property type="match status" value="1"/>
</dbReference>
<dbReference type="SMART" id="SM00220">
    <property type="entry name" value="S_TKc"/>
    <property type="match status" value="1"/>
</dbReference>
<dbReference type="SUPFAM" id="SSF52058">
    <property type="entry name" value="L domain-like"/>
    <property type="match status" value="1"/>
</dbReference>
<dbReference type="SUPFAM" id="SSF56112">
    <property type="entry name" value="Protein kinase-like (PK-like)"/>
    <property type="match status" value="1"/>
</dbReference>
<dbReference type="PROSITE" id="PS00107">
    <property type="entry name" value="PROTEIN_KINASE_ATP"/>
    <property type="match status" value="1"/>
</dbReference>
<dbReference type="PROSITE" id="PS50011">
    <property type="entry name" value="PROTEIN_KINASE_DOM"/>
    <property type="match status" value="1"/>
</dbReference>
<dbReference type="PROSITE" id="PS00108">
    <property type="entry name" value="PROTEIN_KINASE_ST"/>
    <property type="match status" value="1"/>
</dbReference>